<dbReference type="EC" id="3.1.3.11"/>
<dbReference type="EC" id="3.1.3.37"/>
<dbReference type="EMBL" id="CP000239">
    <property type="protein sequence ID" value="ABC98759.1"/>
    <property type="molecule type" value="Genomic_DNA"/>
</dbReference>
<dbReference type="SMR" id="Q2JWU7"/>
<dbReference type="STRING" id="321327.CYA_0542"/>
<dbReference type="KEGG" id="cya:CYA_0542"/>
<dbReference type="eggNOG" id="COG1494">
    <property type="taxonomic scope" value="Bacteria"/>
</dbReference>
<dbReference type="HOGENOM" id="CLU_054938_0_0_3"/>
<dbReference type="OrthoDB" id="9779353at2"/>
<dbReference type="UniPathway" id="UPA00116"/>
<dbReference type="Proteomes" id="UP000008818">
    <property type="component" value="Chromosome"/>
</dbReference>
<dbReference type="GO" id="GO:0005829">
    <property type="term" value="C:cytosol"/>
    <property type="evidence" value="ECO:0007669"/>
    <property type="project" value="TreeGrafter"/>
</dbReference>
<dbReference type="GO" id="GO:0042132">
    <property type="term" value="F:fructose 1,6-bisphosphate 1-phosphatase activity"/>
    <property type="evidence" value="ECO:0007669"/>
    <property type="project" value="UniProtKB-EC"/>
</dbReference>
<dbReference type="GO" id="GO:0046872">
    <property type="term" value="F:metal ion binding"/>
    <property type="evidence" value="ECO:0007669"/>
    <property type="project" value="UniProtKB-KW"/>
</dbReference>
<dbReference type="GO" id="GO:0050278">
    <property type="term" value="F:sedoheptulose-bisphosphatase activity"/>
    <property type="evidence" value="ECO:0007669"/>
    <property type="project" value="UniProtKB-EC"/>
</dbReference>
<dbReference type="GO" id="GO:0030388">
    <property type="term" value="P:fructose 1,6-bisphosphate metabolic process"/>
    <property type="evidence" value="ECO:0007669"/>
    <property type="project" value="TreeGrafter"/>
</dbReference>
<dbReference type="GO" id="GO:0006094">
    <property type="term" value="P:gluconeogenesis"/>
    <property type="evidence" value="ECO:0007669"/>
    <property type="project" value="InterPro"/>
</dbReference>
<dbReference type="GO" id="GO:0006071">
    <property type="term" value="P:glycerol metabolic process"/>
    <property type="evidence" value="ECO:0007669"/>
    <property type="project" value="InterPro"/>
</dbReference>
<dbReference type="GO" id="GO:0019253">
    <property type="term" value="P:reductive pentose-phosphate cycle"/>
    <property type="evidence" value="ECO:0007669"/>
    <property type="project" value="UniProtKB-UniPathway"/>
</dbReference>
<dbReference type="CDD" id="cd01516">
    <property type="entry name" value="FBPase_glpX"/>
    <property type="match status" value="1"/>
</dbReference>
<dbReference type="FunFam" id="3.40.190.90:FF:000001">
    <property type="entry name" value="Fructose-1,6-bisphosphatase"/>
    <property type="match status" value="1"/>
</dbReference>
<dbReference type="Gene3D" id="3.40.190.90">
    <property type="match status" value="1"/>
</dbReference>
<dbReference type="Gene3D" id="3.30.540.10">
    <property type="entry name" value="Fructose-1,6-Bisphosphatase, subunit A, domain 1"/>
    <property type="match status" value="1"/>
</dbReference>
<dbReference type="InterPro" id="IPR004464">
    <property type="entry name" value="FBPase_class-2/SBPase"/>
</dbReference>
<dbReference type="NCBIfam" id="TIGR00330">
    <property type="entry name" value="glpX"/>
    <property type="match status" value="1"/>
</dbReference>
<dbReference type="PANTHER" id="PTHR30447:SF0">
    <property type="entry name" value="FRUCTOSE-1,6-BISPHOSPHATASE 1 CLASS 2-RELATED"/>
    <property type="match status" value="1"/>
</dbReference>
<dbReference type="PANTHER" id="PTHR30447">
    <property type="entry name" value="FRUCTOSE-1,6-BISPHOSPHATASE CLASS 2"/>
    <property type="match status" value="1"/>
</dbReference>
<dbReference type="Pfam" id="PF03320">
    <property type="entry name" value="FBPase_glpX"/>
    <property type="match status" value="1"/>
</dbReference>
<dbReference type="PIRSF" id="PIRSF004532">
    <property type="entry name" value="GlpX"/>
    <property type="match status" value="1"/>
</dbReference>
<dbReference type="SUPFAM" id="SSF56655">
    <property type="entry name" value="Carbohydrate phosphatase"/>
    <property type="match status" value="1"/>
</dbReference>
<keyword id="KW-0113">Calvin cycle</keyword>
<keyword id="KW-0119">Carbohydrate metabolism</keyword>
<keyword id="KW-0378">Hydrolase</keyword>
<keyword id="KW-0464">Manganese</keyword>
<keyword id="KW-0479">Metal-binding</keyword>
<organism>
    <name type="scientific">Synechococcus sp. (strain JA-3-3Ab)</name>
    <name type="common">Cyanobacteria bacterium Yellowstone A-Prime</name>
    <dbReference type="NCBI Taxonomy" id="321327"/>
    <lineage>
        <taxon>Bacteria</taxon>
        <taxon>Bacillati</taxon>
        <taxon>Cyanobacteriota</taxon>
        <taxon>Cyanophyceae</taxon>
        <taxon>Synechococcales</taxon>
        <taxon>Synechococcaceae</taxon>
        <taxon>Synechococcus</taxon>
    </lineage>
</organism>
<evidence type="ECO:0000250" key="1"/>
<evidence type="ECO:0000305" key="2"/>
<name>FBSB_SYNJA</name>
<feature type="chain" id="PRO_0000342731" description="D-fructose 1,6-bisphosphatase class 2/sedoheptulose 1,7-bisphosphatase">
    <location>
        <begin position="1"/>
        <end position="347"/>
    </location>
</feature>
<feature type="binding site" evidence="1">
    <location>
        <position position="33"/>
    </location>
    <ligand>
        <name>Mn(2+)</name>
        <dbReference type="ChEBI" id="CHEBI:29035"/>
        <label>1</label>
    </ligand>
</feature>
<feature type="binding site" evidence="1">
    <location>
        <position position="57"/>
    </location>
    <ligand>
        <name>Mn(2+)</name>
        <dbReference type="ChEBI" id="CHEBI:29035"/>
        <label>1</label>
    </ligand>
</feature>
<feature type="binding site" evidence="1">
    <location>
        <position position="97"/>
    </location>
    <ligand>
        <name>Mn(2+)</name>
        <dbReference type="ChEBI" id="CHEBI:29035"/>
        <label>2</label>
    </ligand>
</feature>
<feature type="binding site" evidence="1">
    <location>
        <begin position="100"/>
        <end position="102"/>
    </location>
    <ligand>
        <name>substrate</name>
    </ligand>
</feature>
<feature type="binding site" evidence="1">
    <location>
        <position position="100"/>
    </location>
    <ligand>
        <name>Mn(2+)</name>
        <dbReference type="ChEBI" id="CHEBI:29035"/>
        <label>2</label>
    </ligand>
</feature>
<feature type="binding site" evidence="1">
    <location>
        <position position="131"/>
    </location>
    <ligand>
        <name>substrate</name>
    </ligand>
</feature>
<feature type="binding site" evidence="1">
    <location>
        <begin position="176"/>
        <end position="178"/>
    </location>
    <ligand>
        <name>substrate</name>
    </ligand>
</feature>
<feature type="binding site" evidence="1">
    <location>
        <begin position="198"/>
        <end position="200"/>
    </location>
    <ligand>
        <name>substrate</name>
    </ligand>
</feature>
<feature type="binding site" evidence="1">
    <location>
        <position position="225"/>
    </location>
    <ligand>
        <name>Mn(2+)</name>
        <dbReference type="ChEBI" id="CHEBI:29035"/>
        <label>2</label>
    </ligand>
</feature>
<protein>
    <recommendedName>
        <fullName>D-fructose 1,6-bisphosphatase class 2/sedoheptulose 1,7-bisphosphatase</fullName>
        <shortName>FBPase class 2/SBPase</shortName>
        <ecNumber>3.1.3.11</ecNumber>
        <ecNumber>3.1.3.37</ecNumber>
    </recommendedName>
</protein>
<proteinExistence type="inferred from homology"/>
<reference key="1">
    <citation type="journal article" date="2007" name="ISME J.">
        <title>Population level functional diversity in a microbial community revealed by comparative genomic and metagenomic analyses.</title>
        <authorList>
            <person name="Bhaya D."/>
            <person name="Grossman A.R."/>
            <person name="Steunou A.-S."/>
            <person name="Khuri N."/>
            <person name="Cohan F.M."/>
            <person name="Hamamura N."/>
            <person name="Melendrez M.C."/>
            <person name="Bateson M.M."/>
            <person name="Ward D.M."/>
            <person name="Heidelberg J.F."/>
        </authorList>
    </citation>
    <scope>NUCLEOTIDE SEQUENCE [LARGE SCALE GENOMIC DNA]</scope>
    <source>
        <strain>JA-3-3Ab</strain>
    </source>
</reference>
<comment type="function">
    <text evidence="1">Catalyzes the hydrolysis of fructose 1,6-bisphosphate (Fru 1,6-P2) and sedoheptulose 1,7-bisphosphate (Sed 1,7-P2) to fructose 6-phosphate and sedoheptulose 7-phosphate, respectively.</text>
</comment>
<comment type="catalytic activity">
    <reaction>
        <text>beta-D-fructose 1,6-bisphosphate + H2O = beta-D-fructose 6-phosphate + phosphate</text>
        <dbReference type="Rhea" id="RHEA:11064"/>
        <dbReference type="ChEBI" id="CHEBI:15377"/>
        <dbReference type="ChEBI" id="CHEBI:32966"/>
        <dbReference type="ChEBI" id="CHEBI:43474"/>
        <dbReference type="ChEBI" id="CHEBI:57634"/>
        <dbReference type="EC" id="3.1.3.11"/>
    </reaction>
</comment>
<comment type="catalytic activity">
    <reaction>
        <text>D-sedoheptulose 1,7-bisphosphate + H2O = D-sedoheptulose 7-phosphate + phosphate</text>
        <dbReference type="Rhea" id="RHEA:17461"/>
        <dbReference type="ChEBI" id="CHEBI:15377"/>
        <dbReference type="ChEBI" id="CHEBI:43474"/>
        <dbReference type="ChEBI" id="CHEBI:57483"/>
        <dbReference type="ChEBI" id="CHEBI:58335"/>
        <dbReference type="EC" id="3.1.3.37"/>
    </reaction>
</comment>
<comment type="cofactor">
    <cofactor evidence="1">
        <name>Mn(2+)</name>
        <dbReference type="ChEBI" id="CHEBI:29035"/>
    </cofactor>
</comment>
<comment type="pathway">
    <text>Carbohydrate biosynthesis; Calvin cycle.</text>
</comment>
<comment type="subunit">
    <text evidence="1">Homotetramer.</text>
</comment>
<comment type="similarity">
    <text evidence="2">Belongs to the FBPase class 2 family.</text>
</comment>
<gene>
    <name type="ordered locus">CYA_0542</name>
</gene>
<accession>Q2JWU7</accession>
<sequence>MDNKLGLEIIEVVEQAAIAAARWMGKGDNKTADQVAVEAMREKLNQIPMRGRIVIGEGTRDEAPMLYIGEEVGICTRPDAEQFCRVEELVEIDIAVDPCEGTNLVAKGQNGSMAVLAISEKGGLLHAPDIYMQKLAAPPQAKGKVHLDYPPEKNLQIIAESLDREVSDLTVVVMDRKRHVDLIRQIREAGARVKLITDGDISAALSAGFNGTGIHALMGIGAAPEGVISAAALRCLGAHFQGRLIYDPEVVQAGTYLPPVEETRRQLKEQGIEDPDKVWECEELASGKEVLFAATGITDGDLMRGVRFFGGGARTETLVISSQSRTVRFVDTIHMKDGQQPRSLQLR</sequence>